<organism>
    <name type="scientific">Gluconobacter oxydans (strain 621H)</name>
    <name type="common">Gluconobacter suboxydans</name>
    <dbReference type="NCBI Taxonomy" id="290633"/>
    <lineage>
        <taxon>Bacteria</taxon>
        <taxon>Pseudomonadati</taxon>
        <taxon>Pseudomonadota</taxon>
        <taxon>Alphaproteobacteria</taxon>
        <taxon>Acetobacterales</taxon>
        <taxon>Acetobacteraceae</taxon>
        <taxon>Gluconobacter</taxon>
    </lineage>
</organism>
<protein>
    <recommendedName>
        <fullName evidence="1">Small ribosomal subunit protein uS4</fullName>
    </recommendedName>
    <alternativeName>
        <fullName evidence="3">30S ribosomal protein S4</fullName>
    </alternativeName>
</protein>
<keyword id="KW-1185">Reference proteome</keyword>
<keyword id="KW-0687">Ribonucleoprotein</keyword>
<keyword id="KW-0689">Ribosomal protein</keyword>
<keyword id="KW-0694">RNA-binding</keyword>
<keyword id="KW-0699">rRNA-binding</keyword>
<comment type="function">
    <text evidence="1">One of the primary rRNA binding proteins, it binds directly to 16S rRNA where it nucleates assembly of the body of the 30S subunit.</text>
</comment>
<comment type="function">
    <text evidence="1">With S5 and S12 plays an important role in translational accuracy.</text>
</comment>
<comment type="subunit">
    <text evidence="1">Part of the 30S ribosomal subunit. Contacts protein S5. The interaction surface between S4 and S5 is involved in control of translational fidelity.</text>
</comment>
<comment type="similarity">
    <text evidence="1">Belongs to the universal ribosomal protein uS4 family.</text>
</comment>
<gene>
    <name evidence="1" type="primary">rpsD</name>
    <name type="ordered locus">GOX1780</name>
</gene>
<reference key="1">
    <citation type="journal article" date="2005" name="Nat. Biotechnol.">
        <title>Complete genome sequence of the acetic acid bacterium Gluconobacter oxydans.</title>
        <authorList>
            <person name="Prust C."/>
            <person name="Hoffmeister M."/>
            <person name="Liesegang H."/>
            <person name="Wiezer A."/>
            <person name="Fricke W.F."/>
            <person name="Ehrenreich A."/>
            <person name="Gottschalk G."/>
            <person name="Deppenmeier U."/>
        </authorList>
    </citation>
    <scope>NUCLEOTIDE SEQUENCE [LARGE SCALE GENOMIC DNA]</scope>
    <source>
        <strain>621H</strain>
    </source>
</reference>
<evidence type="ECO:0000255" key="1">
    <source>
        <dbReference type="HAMAP-Rule" id="MF_01306"/>
    </source>
</evidence>
<evidence type="ECO:0000256" key="2">
    <source>
        <dbReference type="SAM" id="MobiDB-lite"/>
    </source>
</evidence>
<evidence type="ECO:0000305" key="3"/>
<accession>Q5FQ27</accession>
<dbReference type="EMBL" id="CP000009">
    <property type="protein sequence ID" value="AAW61519.1"/>
    <property type="molecule type" value="Genomic_DNA"/>
</dbReference>
<dbReference type="RefSeq" id="WP_011253300.1">
    <property type="nucleotide sequence ID" value="NZ_LT900338.1"/>
</dbReference>
<dbReference type="SMR" id="Q5FQ27"/>
<dbReference type="STRING" id="290633.GOX1780"/>
<dbReference type="GeneID" id="56906114"/>
<dbReference type="KEGG" id="gox:GOX1780"/>
<dbReference type="eggNOG" id="COG0522">
    <property type="taxonomic scope" value="Bacteria"/>
</dbReference>
<dbReference type="HOGENOM" id="CLU_092403_0_0_5"/>
<dbReference type="Proteomes" id="UP000006375">
    <property type="component" value="Chromosome"/>
</dbReference>
<dbReference type="GO" id="GO:0015935">
    <property type="term" value="C:small ribosomal subunit"/>
    <property type="evidence" value="ECO:0007669"/>
    <property type="project" value="InterPro"/>
</dbReference>
<dbReference type="GO" id="GO:0019843">
    <property type="term" value="F:rRNA binding"/>
    <property type="evidence" value="ECO:0007669"/>
    <property type="project" value="UniProtKB-UniRule"/>
</dbReference>
<dbReference type="GO" id="GO:0003735">
    <property type="term" value="F:structural constituent of ribosome"/>
    <property type="evidence" value="ECO:0007669"/>
    <property type="project" value="InterPro"/>
</dbReference>
<dbReference type="GO" id="GO:0042274">
    <property type="term" value="P:ribosomal small subunit biogenesis"/>
    <property type="evidence" value="ECO:0007669"/>
    <property type="project" value="TreeGrafter"/>
</dbReference>
<dbReference type="GO" id="GO:0006412">
    <property type="term" value="P:translation"/>
    <property type="evidence" value="ECO:0007669"/>
    <property type="project" value="UniProtKB-UniRule"/>
</dbReference>
<dbReference type="CDD" id="cd00165">
    <property type="entry name" value="S4"/>
    <property type="match status" value="1"/>
</dbReference>
<dbReference type="FunFam" id="3.10.290.10:FF:000001">
    <property type="entry name" value="30S ribosomal protein S4"/>
    <property type="match status" value="1"/>
</dbReference>
<dbReference type="Gene3D" id="1.10.1050.10">
    <property type="entry name" value="Ribosomal Protein S4 Delta 41, Chain A, domain 1"/>
    <property type="match status" value="1"/>
</dbReference>
<dbReference type="Gene3D" id="3.10.290.10">
    <property type="entry name" value="RNA-binding S4 domain"/>
    <property type="match status" value="1"/>
</dbReference>
<dbReference type="HAMAP" id="MF_01306_B">
    <property type="entry name" value="Ribosomal_uS4_B"/>
    <property type="match status" value="1"/>
</dbReference>
<dbReference type="InterPro" id="IPR022801">
    <property type="entry name" value="Ribosomal_uS4"/>
</dbReference>
<dbReference type="InterPro" id="IPR005709">
    <property type="entry name" value="Ribosomal_uS4_bac-type"/>
</dbReference>
<dbReference type="InterPro" id="IPR018079">
    <property type="entry name" value="Ribosomal_uS4_CS"/>
</dbReference>
<dbReference type="InterPro" id="IPR001912">
    <property type="entry name" value="Ribosomal_uS4_N"/>
</dbReference>
<dbReference type="InterPro" id="IPR002942">
    <property type="entry name" value="S4_RNA-bd"/>
</dbReference>
<dbReference type="InterPro" id="IPR036986">
    <property type="entry name" value="S4_RNA-bd_sf"/>
</dbReference>
<dbReference type="NCBIfam" id="NF003717">
    <property type="entry name" value="PRK05327.1"/>
    <property type="match status" value="1"/>
</dbReference>
<dbReference type="NCBIfam" id="TIGR01017">
    <property type="entry name" value="rpsD_bact"/>
    <property type="match status" value="1"/>
</dbReference>
<dbReference type="PANTHER" id="PTHR11831">
    <property type="entry name" value="30S 40S RIBOSOMAL PROTEIN"/>
    <property type="match status" value="1"/>
</dbReference>
<dbReference type="PANTHER" id="PTHR11831:SF4">
    <property type="entry name" value="SMALL RIBOSOMAL SUBUNIT PROTEIN US4M"/>
    <property type="match status" value="1"/>
</dbReference>
<dbReference type="Pfam" id="PF00163">
    <property type="entry name" value="Ribosomal_S4"/>
    <property type="match status" value="1"/>
</dbReference>
<dbReference type="Pfam" id="PF01479">
    <property type="entry name" value="S4"/>
    <property type="match status" value="1"/>
</dbReference>
<dbReference type="SMART" id="SM01390">
    <property type="entry name" value="Ribosomal_S4"/>
    <property type="match status" value="1"/>
</dbReference>
<dbReference type="SMART" id="SM00363">
    <property type="entry name" value="S4"/>
    <property type="match status" value="1"/>
</dbReference>
<dbReference type="SUPFAM" id="SSF55174">
    <property type="entry name" value="Alpha-L RNA-binding motif"/>
    <property type="match status" value="1"/>
</dbReference>
<dbReference type="PROSITE" id="PS00632">
    <property type="entry name" value="RIBOSOMAL_S4"/>
    <property type="match status" value="1"/>
</dbReference>
<dbReference type="PROSITE" id="PS50889">
    <property type="entry name" value="S4"/>
    <property type="match status" value="1"/>
</dbReference>
<sequence>MSKRLESKYKINRRLGVNLWGRAKSPVNRREYGPGQHGQRRKQKPSDFSIQLMAKQKLKGYYGNISEKQFRKYYDEAVRRKGDTSENLIGLLERRLDAVVYRLKFAITPFASRQFISHGHVTVNGKKVNIPSYLVKEGDVIEVRDSSKQLAIVLDAVQTGERDTPEYVEVDHRQMKGTFLRTPVLSDVPYPVQMEPNLVVEFYSR</sequence>
<name>RS4_GLUOX</name>
<proteinExistence type="inferred from homology"/>
<feature type="chain" id="PRO_0000228896" description="Small ribosomal subunit protein uS4">
    <location>
        <begin position="1"/>
        <end position="205"/>
    </location>
</feature>
<feature type="domain" description="S4 RNA-binding" evidence="1">
    <location>
        <begin position="94"/>
        <end position="157"/>
    </location>
</feature>
<feature type="region of interest" description="Disordered" evidence="2">
    <location>
        <begin position="26"/>
        <end position="46"/>
    </location>
</feature>